<dbReference type="EC" id="2.8.1.8" evidence="1"/>
<dbReference type="EMBL" id="CP000090">
    <property type="protein sequence ID" value="AAZ59468.1"/>
    <property type="molecule type" value="Genomic_DNA"/>
</dbReference>
<dbReference type="SMR" id="Q477G5"/>
<dbReference type="STRING" id="264198.Reut_A0086"/>
<dbReference type="KEGG" id="reu:Reut_A0086"/>
<dbReference type="eggNOG" id="COG0320">
    <property type="taxonomic scope" value="Bacteria"/>
</dbReference>
<dbReference type="HOGENOM" id="CLU_033144_2_1_4"/>
<dbReference type="OrthoDB" id="9787898at2"/>
<dbReference type="UniPathway" id="UPA00538">
    <property type="reaction ID" value="UER00593"/>
</dbReference>
<dbReference type="GO" id="GO:0005737">
    <property type="term" value="C:cytoplasm"/>
    <property type="evidence" value="ECO:0007669"/>
    <property type="project" value="UniProtKB-SubCell"/>
</dbReference>
<dbReference type="GO" id="GO:0051539">
    <property type="term" value="F:4 iron, 4 sulfur cluster binding"/>
    <property type="evidence" value="ECO:0007669"/>
    <property type="project" value="UniProtKB-UniRule"/>
</dbReference>
<dbReference type="GO" id="GO:0016992">
    <property type="term" value="F:lipoate synthase activity"/>
    <property type="evidence" value="ECO:0007669"/>
    <property type="project" value="UniProtKB-UniRule"/>
</dbReference>
<dbReference type="GO" id="GO:0046872">
    <property type="term" value="F:metal ion binding"/>
    <property type="evidence" value="ECO:0007669"/>
    <property type="project" value="UniProtKB-KW"/>
</dbReference>
<dbReference type="CDD" id="cd01335">
    <property type="entry name" value="Radical_SAM"/>
    <property type="match status" value="1"/>
</dbReference>
<dbReference type="FunFam" id="3.20.20.70:FF:000040">
    <property type="entry name" value="Lipoyl synthase"/>
    <property type="match status" value="1"/>
</dbReference>
<dbReference type="Gene3D" id="3.20.20.70">
    <property type="entry name" value="Aldolase class I"/>
    <property type="match status" value="1"/>
</dbReference>
<dbReference type="HAMAP" id="MF_00206">
    <property type="entry name" value="Lipoyl_synth"/>
    <property type="match status" value="1"/>
</dbReference>
<dbReference type="InterPro" id="IPR013785">
    <property type="entry name" value="Aldolase_TIM"/>
</dbReference>
<dbReference type="InterPro" id="IPR006638">
    <property type="entry name" value="Elp3/MiaA/NifB-like_rSAM"/>
</dbReference>
<dbReference type="InterPro" id="IPR031691">
    <property type="entry name" value="LIAS_N"/>
</dbReference>
<dbReference type="InterPro" id="IPR003698">
    <property type="entry name" value="Lipoyl_synth"/>
</dbReference>
<dbReference type="InterPro" id="IPR007197">
    <property type="entry name" value="rSAM"/>
</dbReference>
<dbReference type="NCBIfam" id="TIGR00510">
    <property type="entry name" value="lipA"/>
    <property type="match status" value="1"/>
</dbReference>
<dbReference type="NCBIfam" id="NF004019">
    <property type="entry name" value="PRK05481.1"/>
    <property type="match status" value="1"/>
</dbReference>
<dbReference type="NCBIfam" id="NF009544">
    <property type="entry name" value="PRK12928.1"/>
    <property type="match status" value="1"/>
</dbReference>
<dbReference type="PANTHER" id="PTHR10949">
    <property type="entry name" value="LIPOYL SYNTHASE"/>
    <property type="match status" value="1"/>
</dbReference>
<dbReference type="PANTHER" id="PTHR10949:SF0">
    <property type="entry name" value="LIPOYL SYNTHASE, MITOCHONDRIAL"/>
    <property type="match status" value="1"/>
</dbReference>
<dbReference type="Pfam" id="PF16881">
    <property type="entry name" value="LIAS_N"/>
    <property type="match status" value="1"/>
</dbReference>
<dbReference type="Pfam" id="PF04055">
    <property type="entry name" value="Radical_SAM"/>
    <property type="match status" value="1"/>
</dbReference>
<dbReference type="PIRSF" id="PIRSF005963">
    <property type="entry name" value="Lipoyl_synth"/>
    <property type="match status" value="1"/>
</dbReference>
<dbReference type="SFLD" id="SFLDF00271">
    <property type="entry name" value="lipoyl_synthase"/>
    <property type="match status" value="1"/>
</dbReference>
<dbReference type="SFLD" id="SFLDS00029">
    <property type="entry name" value="Radical_SAM"/>
    <property type="match status" value="1"/>
</dbReference>
<dbReference type="SMART" id="SM00729">
    <property type="entry name" value="Elp3"/>
    <property type="match status" value="1"/>
</dbReference>
<dbReference type="SUPFAM" id="SSF102114">
    <property type="entry name" value="Radical SAM enzymes"/>
    <property type="match status" value="1"/>
</dbReference>
<dbReference type="PROSITE" id="PS51918">
    <property type="entry name" value="RADICAL_SAM"/>
    <property type="match status" value="1"/>
</dbReference>
<gene>
    <name evidence="1" type="primary">lipA</name>
    <name type="ordered locus">Reut_A0086</name>
</gene>
<sequence length="331" mass="36979">MSDALIASSSEAPQSPAEQYDPTRKQKSADKTARIPIKIVPAEKLKKPDWIRVKAATGNSRFYEIKDILRANNLVTVCEEASCPNIGECFGKGTATFMIMGDKCTRRCPFCDVGHGRPDPLDVNEPGNLARTIAQLKLNYVVITSVDRDDLRDGGAQHYVDCISQTRELSPATRIEVLVPDFRGRLDKALDILQACPPDVMNHNMETVPRLYKQARPGADYAHSLKLLQEFKRRNPNVPTKSGLMVGLGETDEEILEVMRDMRAHDIDMLTIGQYLAPSNHHLPVLRYVHPDTFKMFEEEAYKMGFTHAAVGAMVRSSYHADQQAHQAGFA</sequence>
<name>LIPA_CUPPJ</name>
<accession>Q477G5</accession>
<organism>
    <name type="scientific">Cupriavidus pinatubonensis (strain JMP 134 / LMG 1197)</name>
    <name type="common">Cupriavidus necator (strain JMP 134)</name>
    <dbReference type="NCBI Taxonomy" id="264198"/>
    <lineage>
        <taxon>Bacteria</taxon>
        <taxon>Pseudomonadati</taxon>
        <taxon>Pseudomonadota</taxon>
        <taxon>Betaproteobacteria</taxon>
        <taxon>Burkholderiales</taxon>
        <taxon>Burkholderiaceae</taxon>
        <taxon>Cupriavidus</taxon>
    </lineage>
</organism>
<comment type="function">
    <text evidence="1">Catalyzes the radical-mediated insertion of two sulfur atoms into the C-6 and C-8 positions of the octanoyl moiety bound to the lipoyl domains of lipoate-dependent enzymes, thereby converting the octanoylated domains into lipoylated derivatives.</text>
</comment>
<comment type="catalytic activity">
    <reaction evidence="1">
        <text>[[Fe-S] cluster scaffold protein carrying a second [4Fe-4S](2+) cluster] + N(6)-octanoyl-L-lysyl-[protein] + 2 oxidized [2Fe-2S]-[ferredoxin] + 2 S-adenosyl-L-methionine + 4 H(+) = [[Fe-S] cluster scaffold protein] + N(6)-[(R)-dihydrolipoyl]-L-lysyl-[protein] + 4 Fe(3+) + 2 hydrogen sulfide + 2 5'-deoxyadenosine + 2 L-methionine + 2 reduced [2Fe-2S]-[ferredoxin]</text>
        <dbReference type="Rhea" id="RHEA:16585"/>
        <dbReference type="Rhea" id="RHEA-COMP:9928"/>
        <dbReference type="Rhea" id="RHEA-COMP:10000"/>
        <dbReference type="Rhea" id="RHEA-COMP:10001"/>
        <dbReference type="Rhea" id="RHEA-COMP:10475"/>
        <dbReference type="Rhea" id="RHEA-COMP:14568"/>
        <dbReference type="Rhea" id="RHEA-COMP:14569"/>
        <dbReference type="ChEBI" id="CHEBI:15378"/>
        <dbReference type="ChEBI" id="CHEBI:17319"/>
        <dbReference type="ChEBI" id="CHEBI:29034"/>
        <dbReference type="ChEBI" id="CHEBI:29919"/>
        <dbReference type="ChEBI" id="CHEBI:33722"/>
        <dbReference type="ChEBI" id="CHEBI:33737"/>
        <dbReference type="ChEBI" id="CHEBI:33738"/>
        <dbReference type="ChEBI" id="CHEBI:57844"/>
        <dbReference type="ChEBI" id="CHEBI:59789"/>
        <dbReference type="ChEBI" id="CHEBI:78809"/>
        <dbReference type="ChEBI" id="CHEBI:83100"/>
        <dbReference type="EC" id="2.8.1.8"/>
    </reaction>
</comment>
<comment type="cofactor">
    <cofactor evidence="1">
        <name>[4Fe-4S] cluster</name>
        <dbReference type="ChEBI" id="CHEBI:49883"/>
    </cofactor>
    <text evidence="1">Binds 2 [4Fe-4S] clusters per subunit. One cluster is coordinated with 3 cysteines and an exchangeable S-adenosyl-L-methionine.</text>
</comment>
<comment type="pathway">
    <text evidence="1">Protein modification; protein lipoylation via endogenous pathway; protein N(6)-(lipoyl)lysine from octanoyl-[acyl-carrier-protein]: step 2/2.</text>
</comment>
<comment type="subcellular location">
    <subcellularLocation>
        <location evidence="1">Cytoplasm</location>
    </subcellularLocation>
</comment>
<comment type="similarity">
    <text evidence="1">Belongs to the radical SAM superfamily. Lipoyl synthase family.</text>
</comment>
<reference key="1">
    <citation type="journal article" date="2010" name="PLoS ONE">
        <title>The complete multipartite genome sequence of Cupriavidus necator JMP134, a versatile pollutant degrader.</title>
        <authorList>
            <person name="Lykidis A."/>
            <person name="Perez-Pantoja D."/>
            <person name="Ledger T."/>
            <person name="Mavromatis K."/>
            <person name="Anderson I.J."/>
            <person name="Ivanova N.N."/>
            <person name="Hooper S.D."/>
            <person name="Lapidus A."/>
            <person name="Lucas S."/>
            <person name="Gonzalez B."/>
            <person name="Kyrpides N.C."/>
        </authorList>
    </citation>
    <scope>NUCLEOTIDE SEQUENCE [LARGE SCALE GENOMIC DNA]</scope>
    <source>
        <strain>JMP134 / LMG 1197</strain>
    </source>
</reference>
<evidence type="ECO:0000255" key="1">
    <source>
        <dbReference type="HAMAP-Rule" id="MF_00206"/>
    </source>
</evidence>
<evidence type="ECO:0000255" key="2">
    <source>
        <dbReference type="PROSITE-ProRule" id="PRU01266"/>
    </source>
</evidence>
<evidence type="ECO:0000256" key="3">
    <source>
        <dbReference type="SAM" id="MobiDB-lite"/>
    </source>
</evidence>
<feature type="chain" id="PRO_0000325299" description="Lipoyl synthase">
    <location>
        <begin position="1"/>
        <end position="331"/>
    </location>
</feature>
<feature type="domain" description="Radical SAM core" evidence="2">
    <location>
        <begin position="89"/>
        <end position="307"/>
    </location>
</feature>
<feature type="region of interest" description="Disordered" evidence="3">
    <location>
        <begin position="1"/>
        <end position="33"/>
    </location>
</feature>
<feature type="compositionally biased region" description="Low complexity" evidence="3">
    <location>
        <begin position="7"/>
        <end position="19"/>
    </location>
</feature>
<feature type="compositionally biased region" description="Basic and acidic residues" evidence="3">
    <location>
        <begin position="21"/>
        <end position="33"/>
    </location>
</feature>
<feature type="binding site" evidence="1">
    <location>
        <position position="78"/>
    </location>
    <ligand>
        <name>[4Fe-4S] cluster</name>
        <dbReference type="ChEBI" id="CHEBI:49883"/>
        <label>1</label>
    </ligand>
</feature>
<feature type="binding site" evidence="1">
    <location>
        <position position="83"/>
    </location>
    <ligand>
        <name>[4Fe-4S] cluster</name>
        <dbReference type="ChEBI" id="CHEBI:49883"/>
        <label>1</label>
    </ligand>
</feature>
<feature type="binding site" evidence="1">
    <location>
        <position position="89"/>
    </location>
    <ligand>
        <name>[4Fe-4S] cluster</name>
        <dbReference type="ChEBI" id="CHEBI:49883"/>
        <label>1</label>
    </ligand>
</feature>
<feature type="binding site" evidence="1">
    <location>
        <position position="104"/>
    </location>
    <ligand>
        <name>[4Fe-4S] cluster</name>
        <dbReference type="ChEBI" id="CHEBI:49883"/>
        <label>2</label>
        <note>4Fe-4S-S-AdoMet</note>
    </ligand>
</feature>
<feature type="binding site" evidence="1">
    <location>
        <position position="108"/>
    </location>
    <ligand>
        <name>[4Fe-4S] cluster</name>
        <dbReference type="ChEBI" id="CHEBI:49883"/>
        <label>2</label>
        <note>4Fe-4S-S-AdoMet</note>
    </ligand>
</feature>
<feature type="binding site" evidence="1">
    <location>
        <position position="111"/>
    </location>
    <ligand>
        <name>[4Fe-4S] cluster</name>
        <dbReference type="ChEBI" id="CHEBI:49883"/>
        <label>2</label>
        <note>4Fe-4S-S-AdoMet</note>
    </ligand>
</feature>
<feature type="binding site" evidence="1">
    <location>
        <position position="318"/>
    </location>
    <ligand>
        <name>[4Fe-4S] cluster</name>
        <dbReference type="ChEBI" id="CHEBI:49883"/>
        <label>1</label>
    </ligand>
</feature>
<keyword id="KW-0004">4Fe-4S</keyword>
<keyword id="KW-0963">Cytoplasm</keyword>
<keyword id="KW-0408">Iron</keyword>
<keyword id="KW-0411">Iron-sulfur</keyword>
<keyword id="KW-0479">Metal-binding</keyword>
<keyword id="KW-0949">S-adenosyl-L-methionine</keyword>
<keyword id="KW-0808">Transferase</keyword>
<proteinExistence type="inferred from homology"/>
<protein>
    <recommendedName>
        <fullName evidence="1">Lipoyl synthase</fullName>
        <ecNumber evidence="1">2.8.1.8</ecNumber>
    </recommendedName>
    <alternativeName>
        <fullName evidence="1">Lip-syn</fullName>
        <shortName evidence="1">LS</shortName>
    </alternativeName>
    <alternativeName>
        <fullName evidence="1">Lipoate synthase</fullName>
    </alternativeName>
    <alternativeName>
        <fullName evidence="1">Lipoic acid synthase</fullName>
    </alternativeName>
    <alternativeName>
        <fullName evidence="1">Sulfur insertion protein LipA</fullName>
    </alternativeName>
</protein>